<gene>
    <name evidence="1" type="primary">lolD</name>
    <name type="ordered locus">Shewmr7_1813</name>
</gene>
<evidence type="ECO:0000255" key="1">
    <source>
        <dbReference type="HAMAP-Rule" id="MF_01708"/>
    </source>
</evidence>
<evidence type="ECO:0000305" key="2"/>
<proteinExistence type="inferred from homology"/>
<reference key="1">
    <citation type="submission" date="2006-08" db="EMBL/GenBank/DDBJ databases">
        <title>Complete sequence of chromosome 1 of Shewanella sp. MR-7.</title>
        <authorList>
            <person name="Copeland A."/>
            <person name="Lucas S."/>
            <person name="Lapidus A."/>
            <person name="Barry K."/>
            <person name="Detter J.C."/>
            <person name="Glavina del Rio T."/>
            <person name="Hammon N."/>
            <person name="Israni S."/>
            <person name="Dalin E."/>
            <person name="Tice H."/>
            <person name="Pitluck S."/>
            <person name="Kiss H."/>
            <person name="Brettin T."/>
            <person name="Bruce D."/>
            <person name="Han C."/>
            <person name="Tapia R."/>
            <person name="Gilna P."/>
            <person name="Schmutz J."/>
            <person name="Larimer F."/>
            <person name="Land M."/>
            <person name="Hauser L."/>
            <person name="Kyrpides N."/>
            <person name="Mikhailova N."/>
            <person name="Nealson K."/>
            <person name="Konstantinidis K."/>
            <person name="Klappenbach J."/>
            <person name="Tiedje J."/>
            <person name="Richardson P."/>
        </authorList>
    </citation>
    <scope>NUCLEOTIDE SEQUENCE [LARGE SCALE GENOMIC DNA]</scope>
    <source>
        <strain>MR-7</strain>
    </source>
</reference>
<organism>
    <name type="scientific">Shewanella sp. (strain MR-7)</name>
    <dbReference type="NCBI Taxonomy" id="60481"/>
    <lineage>
        <taxon>Bacteria</taxon>
        <taxon>Pseudomonadati</taxon>
        <taxon>Pseudomonadota</taxon>
        <taxon>Gammaproteobacteria</taxon>
        <taxon>Alteromonadales</taxon>
        <taxon>Shewanellaceae</taxon>
        <taxon>Shewanella</taxon>
    </lineage>
</organism>
<comment type="function">
    <text evidence="1">Part of the ABC transporter complex LolCDE involved in the translocation of mature outer membrane-directed lipoproteins, from the inner membrane to the periplasmic chaperone, LolA. Responsible for the formation of the LolA-lipoprotein complex in an ATP-dependent manner.</text>
</comment>
<comment type="subunit">
    <text evidence="1">The complex is composed of two ATP-binding proteins (LolD) and two transmembrane proteins (LolC and LolE).</text>
</comment>
<comment type="subcellular location">
    <subcellularLocation>
        <location evidence="1">Cell inner membrane</location>
        <topology evidence="1">Peripheral membrane protein</topology>
    </subcellularLocation>
</comment>
<comment type="similarity">
    <text evidence="1">Belongs to the ABC transporter superfamily. Lipoprotein translocase (TC 3.A.1.125) family.</text>
</comment>
<comment type="sequence caution" evidence="2">
    <conflict type="erroneous initiation">
        <sequence resource="EMBL-CDS" id="ABI42805"/>
    </conflict>
</comment>
<dbReference type="EC" id="7.6.2.-" evidence="1"/>
<dbReference type="EMBL" id="CP000444">
    <property type="protein sequence ID" value="ABI42805.1"/>
    <property type="status" value="ALT_INIT"/>
    <property type="molecule type" value="Genomic_DNA"/>
</dbReference>
<dbReference type="SMR" id="Q0HVQ0"/>
<dbReference type="KEGG" id="shm:Shewmr7_1813"/>
<dbReference type="HOGENOM" id="CLU_000604_1_22_6"/>
<dbReference type="GO" id="GO:0005886">
    <property type="term" value="C:plasma membrane"/>
    <property type="evidence" value="ECO:0007669"/>
    <property type="project" value="UniProtKB-SubCell"/>
</dbReference>
<dbReference type="GO" id="GO:0005524">
    <property type="term" value="F:ATP binding"/>
    <property type="evidence" value="ECO:0007669"/>
    <property type="project" value="UniProtKB-KW"/>
</dbReference>
<dbReference type="GO" id="GO:0016887">
    <property type="term" value="F:ATP hydrolysis activity"/>
    <property type="evidence" value="ECO:0007669"/>
    <property type="project" value="InterPro"/>
</dbReference>
<dbReference type="GO" id="GO:0022857">
    <property type="term" value="F:transmembrane transporter activity"/>
    <property type="evidence" value="ECO:0007669"/>
    <property type="project" value="TreeGrafter"/>
</dbReference>
<dbReference type="GO" id="GO:0044874">
    <property type="term" value="P:lipoprotein localization to outer membrane"/>
    <property type="evidence" value="ECO:0007669"/>
    <property type="project" value="TreeGrafter"/>
</dbReference>
<dbReference type="GO" id="GO:0089705">
    <property type="term" value="P:protein localization to outer membrane"/>
    <property type="evidence" value="ECO:0007669"/>
    <property type="project" value="TreeGrafter"/>
</dbReference>
<dbReference type="CDD" id="cd03255">
    <property type="entry name" value="ABC_MJ0796_LolCDE_FtsE"/>
    <property type="match status" value="1"/>
</dbReference>
<dbReference type="FunFam" id="3.40.50.300:FF:000230">
    <property type="entry name" value="Lipoprotein-releasing system ATP-binding protein LolD"/>
    <property type="match status" value="1"/>
</dbReference>
<dbReference type="Gene3D" id="3.40.50.300">
    <property type="entry name" value="P-loop containing nucleotide triphosphate hydrolases"/>
    <property type="match status" value="1"/>
</dbReference>
<dbReference type="InterPro" id="IPR003593">
    <property type="entry name" value="AAA+_ATPase"/>
</dbReference>
<dbReference type="InterPro" id="IPR003439">
    <property type="entry name" value="ABC_transporter-like_ATP-bd"/>
</dbReference>
<dbReference type="InterPro" id="IPR017871">
    <property type="entry name" value="ABC_transporter-like_CS"/>
</dbReference>
<dbReference type="InterPro" id="IPR015854">
    <property type="entry name" value="ABC_transpr_LolD-like"/>
</dbReference>
<dbReference type="InterPro" id="IPR011924">
    <property type="entry name" value="LolD_lipo_ATP-bd"/>
</dbReference>
<dbReference type="InterPro" id="IPR017911">
    <property type="entry name" value="MacB-like_ATP-bd"/>
</dbReference>
<dbReference type="InterPro" id="IPR027417">
    <property type="entry name" value="P-loop_NTPase"/>
</dbReference>
<dbReference type="NCBIfam" id="TIGR02211">
    <property type="entry name" value="LolD_lipo_ex"/>
    <property type="match status" value="1"/>
</dbReference>
<dbReference type="PANTHER" id="PTHR24220">
    <property type="entry name" value="IMPORT ATP-BINDING PROTEIN"/>
    <property type="match status" value="1"/>
</dbReference>
<dbReference type="PANTHER" id="PTHR24220:SF689">
    <property type="entry name" value="LIPOPROTEIN-RELEASING SYSTEM ATP-BINDING PROTEIN LOLD"/>
    <property type="match status" value="1"/>
</dbReference>
<dbReference type="Pfam" id="PF00005">
    <property type="entry name" value="ABC_tran"/>
    <property type="match status" value="1"/>
</dbReference>
<dbReference type="SMART" id="SM00382">
    <property type="entry name" value="AAA"/>
    <property type="match status" value="1"/>
</dbReference>
<dbReference type="SUPFAM" id="SSF52540">
    <property type="entry name" value="P-loop containing nucleoside triphosphate hydrolases"/>
    <property type="match status" value="1"/>
</dbReference>
<dbReference type="PROSITE" id="PS00211">
    <property type="entry name" value="ABC_TRANSPORTER_1"/>
    <property type="match status" value="1"/>
</dbReference>
<dbReference type="PROSITE" id="PS50893">
    <property type="entry name" value="ABC_TRANSPORTER_2"/>
    <property type="match status" value="1"/>
</dbReference>
<dbReference type="PROSITE" id="PS51244">
    <property type="entry name" value="LOLD"/>
    <property type="match status" value="1"/>
</dbReference>
<feature type="chain" id="PRO_0000272152" description="Lipoprotein-releasing system ATP-binding protein LolD">
    <location>
        <begin position="1"/>
        <end position="231"/>
    </location>
</feature>
<feature type="domain" description="ABC transporter" evidence="1">
    <location>
        <begin position="6"/>
        <end position="231"/>
    </location>
</feature>
<feature type="binding site" evidence="1">
    <location>
        <begin position="42"/>
        <end position="49"/>
    </location>
    <ligand>
        <name>ATP</name>
        <dbReference type="ChEBI" id="CHEBI:30616"/>
    </ligand>
</feature>
<keyword id="KW-0067">ATP-binding</keyword>
<keyword id="KW-0997">Cell inner membrane</keyword>
<keyword id="KW-1003">Cell membrane</keyword>
<keyword id="KW-0472">Membrane</keyword>
<keyword id="KW-0547">Nucleotide-binding</keyword>
<keyword id="KW-1278">Translocase</keyword>
<keyword id="KW-0813">Transport</keyword>
<accession>Q0HVQ0</accession>
<name>LOLD_SHESR</name>
<sequence>MQDVLLQVQAVSKSYHDGDVTTQVLTEVDLQVFKGEQLAIVGTSGSGKSTLLHIMGTLDKPSAGKVLLAGEDLYQVSSARQAQIRNQDLGFIYQFHHLLPEFSALENVAMPAFIQGRDRTQAQADAKVLLERVGLGHRMSHIPAELSGGERQRVAIARALINKPKLVLADEPTGNLDAKSGEAVYELIRELANQLGTAFVVVTHDPKLAARMDRQLTMKNGYLQAVAEHAQ</sequence>
<protein>
    <recommendedName>
        <fullName evidence="1">Lipoprotein-releasing system ATP-binding protein LolD</fullName>
        <ecNumber evidence="1">7.6.2.-</ecNumber>
    </recommendedName>
</protein>